<dbReference type="EMBL" id="FM200053">
    <property type="protein sequence ID" value="CAR61324.1"/>
    <property type="molecule type" value="Genomic_DNA"/>
</dbReference>
<dbReference type="RefSeq" id="WP_001096206.1">
    <property type="nucleotide sequence ID" value="NC_011147.1"/>
</dbReference>
<dbReference type="SMR" id="B5BGX4"/>
<dbReference type="GeneID" id="93751944"/>
<dbReference type="KEGG" id="sek:SSPA3073"/>
<dbReference type="HOGENOM" id="CLU_061015_2_1_6"/>
<dbReference type="Proteomes" id="UP000001869">
    <property type="component" value="Chromosome"/>
</dbReference>
<dbReference type="GO" id="GO:1990904">
    <property type="term" value="C:ribonucleoprotein complex"/>
    <property type="evidence" value="ECO:0007669"/>
    <property type="project" value="UniProtKB-KW"/>
</dbReference>
<dbReference type="GO" id="GO:0005840">
    <property type="term" value="C:ribosome"/>
    <property type="evidence" value="ECO:0007669"/>
    <property type="project" value="UniProtKB-KW"/>
</dbReference>
<dbReference type="GO" id="GO:0019843">
    <property type="term" value="F:rRNA binding"/>
    <property type="evidence" value="ECO:0007669"/>
    <property type="project" value="UniProtKB-UniRule"/>
</dbReference>
<dbReference type="GO" id="GO:0003735">
    <property type="term" value="F:structural constituent of ribosome"/>
    <property type="evidence" value="ECO:0007669"/>
    <property type="project" value="InterPro"/>
</dbReference>
<dbReference type="GO" id="GO:0000049">
    <property type="term" value="F:tRNA binding"/>
    <property type="evidence" value="ECO:0007669"/>
    <property type="project" value="UniProtKB-UniRule"/>
</dbReference>
<dbReference type="GO" id="GO:0006412">
    <property type="term" value="P:translation"/>
    <property type="evidence" value="ECO:0007669"/>
    <property type="project" value="UniProtKB-UniRule"/>
</dbReference>
<dbReference type="FunFam" id="3.30.1440.10:FF:000001">
    <property type="entry name" value="50S ribosomal protein L5"/>
    <property type="match status" value="1"/>
</dbReference>
<dbReference type="Gene3D" id="3.30.1440.10">
    <property type="match status" value="1"/>
</dbReference>
<dbReference type="HAMAP" id="MF_01333_B">
    <property type="entry name" value="Ribosomal_uL5_B"/>
    <property type="match status" value="1"/>
</dbReference>
<dbReference type="InterPro" id="IPR002132">
    <property type="entry name" value="Ribosomal_uL5"/>
</dbReference>
<dbReference type="InterPro" id="IPR020930">
    <property type="entry name" value="Ribosomal_uL5_bac-type"/>
</dbReference>
<dbReference type="InterPro" id="IPR031309">
    <property type="entry name" value="Ribosomal_uL5_C"/>
</dbReference>
<dbReference type="InterPro" id="IPR020929">
    <property type="entry name" value="Ribosomal_uL5_CS"/>
</dbReference>
<dbReference type="InterPro" id="IPR022803">
    <property type="entry name" value="Ribosomal_uL5_dom_sf"/>
</dbReference>
<dbReference type="InterPro" id="IPR031310">
    <property type="entry name" value="Ribosomal_uL5_N"/>
</dbReference>
<dbReference type="NCBIfam" id="NF000585">
    <property type="entry name" value="PRK00010.1"/>
    <property type="match status" value="1"/>
</dbReference>
<dbReference type="PANTHER" id="PTHR11994">
    <property type="entry name" value="60S RIBOSOMAL PROTEIN L11-RELATED"/>
    <property type="match status" value="1"/>
</dbReference>
<dbReference type="Pfam" id="PF00281">
    <property type="entry name" value="Ribosomal_L5"/>
    <property type="match status" value="1"/>
</dbReference>
<dbReference type="Pfam" id="PF00673">
    <property type="entry name" value="Ribosomal_L5_C"/>
    <property type="match status" value="1"/>
</dbReference>
<dbReference type="PIRSF" id="PIRSF002161">
    <property type="entry name" value="Ribosomal_L5"/>
    <property type="match status" value="1"/>
</dbReference>
<dbReference type="SUPFAM" id="SSF55282">
    <property type="entry name" value="RL5-like"/>
    <property type="match status" value="1"/>
</dbReference>
<dbReference type="PROSITE" id="PS00358">
    <property type="entry name" value="RIBOSOMAL_L5"/>
    <property type="match status" value="1"/>
</dbReference>
<sequence length="179" mass="20318">MAKLHDYYKDEVVNKLMTEFNYNSVMQVPRVEKITLNMGVGEAIADKKLLDNAAADLTAISGQKPLITKARKSVAGFKIRQGYPIGCKVTLRGERMWEFFERLITIAVPRIRDFRGLSAKSFDGRGNYSMGVREQIIFPEIDYDKVDRVRGLDITITTTAKSDEEGRALLAAFDFPFRK</sequence>
<gene>
    <name evidence="1" type="primary">rplE</name>
    <name type="ordered locus">SSPA3073</name>
</gene>
<keyword id="KW-0687">Ribonucleoprotein</keyword>
<keyword id="KW-0689">Ribosomal protein</keyword>
<keyword id="KW-0694">RNA-binding</keyword>
<keyword id="KW-0699">rRNA-binding</keyword>
<keyword id="KW-0820">tRNA-binding</keyword>
<comment type="function">
    <text evidence="1">This is one of the proteins that bind and probably mediate the attachment of the 5S RNA into the large ribosomal subunit, where it forms part of the central protuberance. In the 70S ribosome it contacts protein S13 of the 30S subunit (bridge B1b), connecting the 2 subunits; this bridge is implicated in subunit movement. Contacts the P site tRNA; the 5S rRNA and some of its associated proteins might help stabilize positioning of ribosome-bound tRNAs.</text>
</comment>
<comment type="subunit">
    <text evidence="1">Part of the 50S ribosomal subunit; part of the 5S rRNA/L5/L18/L25 subcomplex. Contacts the 5S rRNA and the P site tRNA. Forms a bridge to the 30S subunit in the 70S ribosome.</text>
</comment>
<comment type="similarity">
    <text evidence="1">Belongs to the universal ribosomal protein uL5 family.</text>
</comment>
<proteinExistence type="inferred from homology"/>
<protein>
    <recommendedName>
        <fullName evidence="1">Large ribosomal subunit protein uL5</fullName>
    </recommendedName>
    <alternativeName>
        <fullName evidence="2">50S ribosomal protein L5</fullName>
    </alternativeName>
</protein>
<name>RL5_SALPK</name>
<reference key="1">
    <citation type="journal article" date="2009" name="BMC Genomics">
        <title>Pseudogene accumulation in the evolutionary histories of Salmonella enterica serovars Paratyphi A and Typhi.</title>
        <authorList>
            <person name="Holt K.E."/>
            <person name="Thomson N.R."/>
            <person name="Wain J."/>
            <person name="Langridge G.C."/>
            <person name="Hasan R."/>
            <person name="Bhutta Z.A."/>
            <person name="Quail M.A."/>
            <person name="Norbertczak H."/>
            <person name="Walker D."/>
            <person name="Simmonds M."/>
            <person name="White B."/>
            <person name="Bason N."/>
            <person name="Mungall K."/>
            <person name="Dougan G."/>
            <person name="Parkhill J."/>
        </authorList>
    </citation>
    <scope>NUCLEOTIDE SEQUENCE [LARGE SCALE GENOMIC DNA]</scope>
    <source>
        <strain>AKU_12601</strain>
    </source>
</reference>
<feature type="chain" id="PRO_1000142448" description="Large ribosomal subunit protein uL5">
    <location>
        <begin position="1"/>
        <end position="179"/>
    </location>
</feature>
<evidence type="ECO:0000255" key="1">
    <source>
        <dbReference type="HAMAP-Rule" id="MF_01333"/>
    </source>
</evidence>
<evidence type="ECO:0000305" key="2"/>
<organism>
    <name type="scientific">Salmonella paratyphi A (strain AKU_12601)</name>
    <dbReference type="NCBI Taxonomy" id="554290"/>
    <lineage>
        <taxon>Bacteria</taxon>
        <taxon>Pseudomonadati</taxon>
        <taxon>Pseudomonadota</taxon>
        <taxon>Gammaproteobacteria</taxon>
        <taxon>Enterobacterales</taxon>
        <taxon>Enterobacteriaceae</taxon>
        <taxon>Salmonella</taxon>
    </lineage>
</organism>
<accession>B5BGX4</accession>